<evidence type="ECO:0000255" key="1">
    <source>
        <dbReference type="HAMAP-Rule" id="MF_02051"/>
    </source>
</evidence>
<gene>
    <name evidence="1" type="primary">lsrG</name>
    <name type="ordered locus">plu3148</name>
</gene>
<feature type="chain" id="PRO_0000351568" description="(4S)-4-hydroxy-5-phosphonooxypentane-2,3-dione isomerase">
    <location>
        <begin position="1"/>
        <end position="99"/>
    </location>
</feature>
<feature type="domain" description="ABM" evidence="1">
    <location>
        <begin position="2"/>
        <end position="91"/>
    </location>
</feature>
<sequence length="99" mass="11651">MHVTLVEINVKQDKLDEFIEVFRLNHLGSIKEAGNLRFDVLRDENIPTRFYIYEAYVDENAANTHKQTSHYLKCVEQLESLISEPRKKRSFIGVMPEIK</sequence>
<reference key="1">
    <citation type="journal article" date="2003" name="Nat. Biotechnol.">
        <title>The genome sequence of the entomopathogenic bacterium Photorhabdus luminescens.</title>
        <authorList>
            <person name="Duchaud E."/>
            <person name="Rusniok C."/>
            <person name="Frangeul L."/>
            <person name="Buchrieser C."/>
            <person name="Givaudan A."/>
            <person name="Taourit S."/>
            <person name="Bocs S."/>
            <person name="Boursaux-Eude C."/>
            <person name="Chandler M."/>
            <person name="Charles J.-F."/>
            <person name="Dassa E."/>
            <person name="Derose R."/>
            <person name="Derzelle S."/>
            <person name="Freyssinet G."/>
            <person name="Gaudriault S."/>
            <person name="Medigue C."/>
            <person name="Lanois A."/>
            <person name="Powell K."/>
            <person name="Siguier P."/>
            <person name="Vincent R."/>
            <person name="Wingate V."/>
            <person name="Zouine M."/>
            <person name="Glaser P."/>
            <person name="Boemare N."/>
            <person name="Danchin A."/>
            <person name="Kunst F."/>
        </authorList>
    </citation>
    <scope>NUCLEOTIDE SEQUENCE [LARGE SCALE GENOMIC DNA]</scope>
    <source>
        <strain>DSM 15139 / CIP 105565 / TT01</strain>
    </source>
</reference>
<protein>
    <recommendedName>
        <fullName evidence="1">(4S)-4-hydroxy-5-phosphonooxypentane-2,3-dione isomerase</fullName>
        <ecNumber evidence="1">5.3.1.32</ecNumber>
    </recommendedName>
    <alternativeName>
        <fullName evidence="1">Autoinducer 2-degrading protein LsrG</fullName>
        <shortName evidence="1">AI-2-degrading protein LsrG</shortName>
    </alternativeName>
    <alternativeName>
        <fullName evidence="1">Phospho-(S)-4,5-dihydroxy-2,3-pentanedione isomerase</fullName>
    </alternativeName>
    <alternativeName>
        <fullName evidence="1">Phospho-AI-2 isomerase</fullName>
    </alternativeName>
</protein>
<accession>Q7N2D5</accession>
<keyword id="KW-0963">Cytoplasm</keyword>
<keyword id="KW-0413">Isomerase</keyword>
<keyword id="KW-1185">Reference proteome</keyword>
<dbReference type="EC" id="5.3.1.32" evidence="1"/>
<dbReference type="EMBL" id="BX571869">
    <property type="protein sequence ID" value="CAE15522.1"/>
    <property type="molecule type" value="Genomic_DNA"/>
</dbReference>
<dbReference type="RefSeq" id="WP_011147359.1">
    <property type="nucleotide sequence ID" value="NC_005126.1"/>
</dbReference>
<dbReference type="SMR" id="Q7N2D5"/>
<dbReference type="STRING" id="243265.plu3148"/>
<dbReference type="GeneID" id="48849407"/>
<dbReference type="KEGG" id="plu:plu3148"/>
<dbReference type="eggNOG" id="COG1359">
    <property type="taxonomic scope" value="Bacteria"/>
</dbReference>
<dbReference type="HOGENOM" id="CLU_131496_3_0_6"/>
<dbReference type="OrthoDB" id="9812754at2"/>
<dbReference type="Proteomes" id="UP000002514">
    <property type="component" value="Chromosome"/>
</dbReference>
<dbReference type="GO" id="GO:0005829">
    <property type="term" value="C:cytosol"/>
    <property type="evidence" value="ECO:0007669"/>
    <property type="project" value="TreeGrafter"/>
</dbReference>
<dbReference type="GO" id="GO:0002952">
    <property type="term" value="F:(4S)-4-hydroxy-5-phosphonooxypentane-2,3-dione isomerase activity"/>
    <property type="evidence" value="ECO:0007669"/>
    <property type="project" value="UniProtKB-EC"/>
</dbReference>
<dbReference type="GO" id="GO:0016491">
    <property type="term" value="F:oxidoreductase activity"/>
    <property type="evidence" value="ECO:0007669"/>
    <property type="project" value="TreeGrafter"/>
</dbReference>
<dbReference type="FunFam" id="3.30.70.100:FF:000016">
    <property type="entry name" value="(4S)-4-hydroxy-5-phosphonooxypentane-2,3-dione isomerase"/>
    <property type="match status" value="1"/>
</dbReference>
<dbReference type="Gene3D" id="3.30.70.100">
    <property type="match status" value="1"/>
</dbReference>
<dbReference type="HAMAP" id="MF_02051">
    <property type="entry name" value="LsrG"/>
    <property type="match status" value="1"/>
</dbReference>
<dbReference type="InterPro" id="IPR007138">
    <property type="entry name" value="ABM_dom"/>
</dbReference>
<dbReference type="InterPro" id="IPR050744">
    <property type="entry name" value="AI-2_Isomerase_LsrG"/>
</dbReference>
<dbReference type="InterPro" id="IPR011008">
    <property type="entry name" value="Dimeric_a/b-barrel"/>
</dbReference>
<dbReference type="InterPro" id="IPR033672">
    <property type="entry name" value="LsrG"/>
</dbReference>
<dbReference type="NCBIfam" id="NF007791">
    <property type="entry name" value="PRK10486.1"/>
    <property type="match status" value="1"/>
</dbReference>
<dbReference type="PANTHER" id="PTHR33336:SF1">
    <property type="entry name" value="(4S)-4-HYDROXY-5-PHOSPHONOOXYPENTANE-2,3-DIONE ISOMERASE"/>
    <property type="match status" value="1"/>
</dbReference>
<dbReference type="PANTHER" id="PTHR33336">
    <property type="entry name" value="QUINOL MONOOXYGENASE YGIN-RELATED"/>
    <property type="match status" value="1"/>
</dbReference>
<dbReference type="Pfam" id="PF03992">
    <property type="entry name" value="ABM"/>
    <property type="match status" value="1"/>
</dbReference>
<dbReference type="SUPFAM" id="SSF54909">
    <property type="entry name" value="Dimeric alpha+beta barrel"/>
    <property type="match status" value="1"/>
</dbReference>
<dbReference type="PROSITE" id="PS51725">
    <property type="entry name" value="ABM"/>
    <property type="match status" value="1"/>
</dbReference>
<proteinExistence type="inferred from homology"/>
<name>LSRG_PHOLL</name>
<organism>
    <name type="scientific">Photorhabdus laumondii subsp. laumondii (strain DSM 15139 / CIP 105565 / TT01)</name>
    <name type="common">Photorhabdus luminescens subsp. laumondii</name>
    <dbReference type="NCBI Taxonomy" id="243265"/>
    <lineage>
        <taxon>Bacteria</taxon>
        <taxon>Pseudomonadati</taxon>
        <taxon>Pseudomonadota</taxon>
        <taxon>Gammaproteobacteria</taxon>
        <taxon>Enterobacterales</taxon>
        <taxon>Morganellaceae</taxon>
        <taxon>Photorhabdus</taxon>
    </lineage>
</organism>
<comment type="function">
    <text evidence="1">Involved in the degradation of phospho-AI-2, thereby terminating induction of the lsr operon and closing the AI-2 signaling cycle. Catalyzes the conversion of (4S)-4-hydroxy-5-phosphonooxypentane-2,3-dione (P-DPD) to 3-hydroxy-5-phosphonooxypentane-2,4-dione (P-HPD).</text>
</comment>
<comment type="catalytic activity">
    <reaction evidence="1">
        <text>(2S)-2-hydroxy-3,4-dioxopentyl phosphate = 3-hydroxy-2,4-dioxopentyl phosphate</text>
        <dbReference type="Rhea" id="RHEA:44360"/>
        <dbReference type="ChEBI" id="CHEBI:71677"/>
        <dbReference type="ChEBI" id="CHEBI:84359"/>
        <dbReference type="EC" id="5.3.1.32"/>
    </reaction>
</comment>
<comment type="subunit">
    <text evidence="1">Homodimer.</text>
</comment>
<comment type="subcellular location">
    <subcellularLocation>
        <location evidence="1">Cytoplasm</location>
    </subcellularLocation>
</comment>
<comment type="similarity">
    <text evidence="1">Belongs to the LsrG family.</text>
</comment>